<gene>
    <name evidence="1" type="primary">rnpA</name>
    <name type="ordered locus">MGAS10750_Spy0202</name>
</gene>
<protein>
    <recommendedName>
        <fullName evidence="1">Ribonuclease P protein component</fullName>
        <shortName evidence="1">RNase P protein</shortName>
        <shortName evidence="1">RNaseP protein</shortName>
        <ecNumber evidence="1">3.1.26.5</ecNumber>
    </recommendedName>
    <alternativeName>
        <fullName evidence="1">Protein C5</fullName>
    </alternativeName>
</protein>
<sequence length="119" mass="13866">MKKTYRVKREKDFQAIFKDGKSTANRKFVIYHLNRGQDHFRVGISVGKKIGNAVTRNAVKRKIRHVIMALGHQLKSEDFVVIARKGVESLEYQELQQNLHHVLKLAQLLEKGFESEEKH</sequence>
<feature type="chain" id="PRO_1000021479" description="Ribonuclease P protein component">
    <location>
        <begin position="1"/>
        <end position="119"/>
    </location>
</feature>
<proteinExistence type="inferred from homology"/>
<keyword id="KW-0255">Endonuclease</keyword>
<keyword id="KW-0378">Hydrolase</keyword>
<keyword id="KW-0540">Nuclease</keyword>
<keyword id="KW-0694">RNA-binding</keyword>
<keyword id="KW-0819">tRNA processing</keyword>
<evidence type="ECO:0000255" key="1">
    <source>
        <dbReference type="HAMAP-Rule" id="MF_00227"/>
    </source>
</evidence>
<name>RNPA_STRPF</name>
<accession>Q1J8K9</accession>
<dbReference type="EC" id="3.1.26.5" evidence="1"/>
<dbReference type="EMBL" id="CP000262">
    <property type="protein sequence ID" value="ABF37152.1"/>
    <property type="molecule type" value="Genomic_DNA"/>
</dbReference>
<dbReference type="SMR" id="Q1J8K9"/>
<dbReference type="KEGG" id="spi:MGAS10750_Spy0202"/>
<dbReference type="HOGENOM" id="CLU_117179_9_1_9"/>
<dbReference type="Proteomes" id="UP000002434">
    <property type="component" value="Chromosome"/>
</dbReference>
<dbReference type="GO" id="GO:0030677">
    <property type="term" value="C:ribonuclease P complex"/>
    <property type="evidence" value="ECO:0007669"/>
    <property type="project" value="TreeGrafter"/>
</dbReference>
<dbReference type="GO" id="GO:0042781">
    <property type="term" value="F:3'-tRNA processing endoribonuclease activity"/>
    <property type="evidence" value="ECO:0007669"/>
    <property type="project" value="TreeGrafter"/>
</dbReference>
<dbReference type="GO" id="GO:0004526">
    <property type="term" value="F:ribonuclease P activity"/>
    <property type="evidence" value="ECO:0007669"/>
    <property type="project" value="UniProtKB-UniRule"/>
</dbReference>
<dbReference type="GO" id="GO:0000049">
    <property type="term" value="F:tRNA binding"/>
    <property type="evidence" value="ECO:0007669"/>
    <property type="project" value="UniProtKB-UniRule"/>
</dbReference>
<dbReference type="GO" id="GO:0001682">
    <property type="term" value="P:tRNA 5'-leader removal"/>
    <property type="evidence" value="ECO:0007669"/>
    <property type="project" value="UniProtKB-UniRule"/>
</dbReference>
<dbReference type="FunFam" id="3.30.230.10:FF:000021">
    <property type="entry name" value="Ribonuclease P protein component"/>
    <property type="match status" value="1"/>
</dbReference>
<dbReference type="Gene3D" id="3.30.230.10">
    <property type="match status" value="1"/>
</dbReference>
<dbReference type="HAMAP" id="MF_00227">
    <property type="entry name" value="RNase_P"/>
    <property type="match status" value="1"/>
</dbReference>
<dbReference type="InterPro" id="IPR020568">
    <property type="entry name" value="Ribosomal_Su5_D2-typ_SF"/>
</dbReference>
<dbReference type="InterPro" id="IPR014721">
    <property type="entry name" value="Ribsml_uS5_D2-typ_fold_subgr"/>
</dbReference>
<dbReference type="InterPro" id="IPR000100">
    <property type="entry name" value="RNase_P"/>
</dbReference>
<dbReference type="InterPro" id="IPR020539">
    <property type="entry name" value="RNase_P_CS"/>
</dbReference>
<dbReference type="NCBIfam" id="TIGR00188">
    <property type="entry name" value="rnpA"/>
    <property type="match status" value="1"/>
</dbReference>
<dbReference type="PANTHER" id="PTHR33992">
    <property type="entry name" value="RIBONUCLEASE P PROTEIN COMPONENT"/>
    <property type="match status" value="1"/>
</dbReference>
<dbReference type="PANTHER" id="PTHR33992:SF1">
    <property type="entry name" value="RIBONUCLEASE P PROTEIN COMPONENT"/>
    <property type="match status" value="1"/>
</dbReference>
<dbReference type="Pfam" id="PF00825">
    <property type="entry name" value="Ribonuclease_P"/>
    <property type="match status" value="1"/>
</dbReference>
<dbReference type="SUPFAM" id="SSF54211">
    <property type="entry name" value="Ribosomal protein S5 domain 2-like"/>
    <property type="match status" value="1"/>
</dbReference>
<dbReference type="PROSITE" id="PS00648">
    <property type="entry name" value="RIBONUCLEASE_P"/>
    <property type="match status" value="1"/>
</dbReference>
<organism>
    <name type="scientific">Streptococcus pyogenes serotype M4 (strain MGAS10750)</name>
    <dbReference type="NCBI Taxonomy" id="370554"/>
    <lineage>
        <taxon>Bacteria</taxon>
        <taxon>Bacillati</taxon>
        <taxon>Bacillota</taxon>
        <taxon>Bacilli</taxon>
        <taxon>Lactobacillales</taxon>
        <taxon>Streptococcaceae</taxon>
        <taxon>Streptococcus</taxon>
    </lineage>
</organism>
<comment type="function">
    <text evidence="1">RNaseP catalyzes the removal of the 5'-leader sequence from pre-tRNA to produce the mature 5'-terminus. It can also cleave other RNA substrates such as 4.5S RNA. The protein component plays an auxiliary but essential role in vivo by binding to the 5'-leader sequence and broadening the substrate specificity of the ribozyme.</text>
</comment>
<comment type="catalytic activity">
    <reaction evidence="1">
        <text>Endonucleolytic cleavage of RNA, removing 5'-extranucleotides from tRNA precursor.</text>
        <dbReference type="EC" id="3.1.26.5"/>
    </reaction>
</comment>
<comment type="subunit">
    <text evidence="1">Consists of a catalytic RNA component (M1 or rnpB) and a protein subunit.</text>
</comment>
<comment type="similarity">
    <text evidence="1">Belongs to the RnpA family.</text>
</comment>
<reference key="1">
    <citation type="journal article" date="2006" name="Proc. Natl. Acad. Sci. U.S.A.">
        <title>Molecular genetic anatomy of inter- and intraserotype variation in the human bacterial pathogen group A Streptococcus.</title>
        <authorList>
            <person name="Beres S.B."/>
            <person name="Richter E.W."/>
            <person name="Nagiec M.J."/>
            <person name="Sumby P."/>
            <person name="Porcella S.F."/>
            <person name="DeLeo F.R."/>
            <person name="Musser J.M."/>
        </authorList>
    </citation>
    <scope>NUCLEOTIDE SEQUENCE [LARGE SCALE GENOMIC DNA]</scope>
    <source>
        <strain>MGAS10750</strain>
    </source>
</reference>